<dbReference type="EC" id="2.7.1.39" evidence="1"/>
<dbReference type="EMBL" id="CP000026">
    <property type="protein sequence ID" value="AAV76042.1"/>
    <property type="molecule type" value="Genomic_DNA"/>
</dbReference>
<dbReference type="RefSeq" id="WP_000241685.1">
    <property type="nucleotide sequence ID" value="NC_006511.1"/>
</dbReference>
<dbReference type="SMR" id="Q5PDM3"/>
<dbReference type="KEGG" id="spt:SPA0003"/>
<dbReference type="HOGENOM" id="CLU_041243_1_1_6"/>
<dbReference type="UniPathway" id="UPA00050">
    <property type="reaction ID" value="UER00064"/>
</dbReference>
<dbReference type="Proteomes" id="UP000008185">
    <property type="component" value="Chromosome"/>
</dbReference>
<dbReference type="GO" id="GO:0005737">
    <property type="term" value="C:cytoplasm"/>
    <property type="evidence" value="ECO:0007669"/>
    <property type="project" value="UniProtKB-SubCell"/>
</dbReference>
<dbReference type="GO" id="GO:0005524">
    <property type="term" value="F:ATP binding"/>
    <property type="evidence" value="ECO:0007669"/>
    <property type="project" value="UniProtKB-UniRule"/>
</dbReference>
<dbReference type="GO" id="GO:0004413">
    <property type="term" value="F:homoserine kinase activity"/>
    <property type="evidence" value="ECO:0007669"/>
    <property type="project" value="UniProtKB-UniRule"/>
</dbReference>
<dbReference type="GO" id="GO:0009088">
    <property type="term" value="P:threonine biosynthetic process"/>
    <property type="evidence" value="ECO:0007669"/>
    <property type="project" value="UniProtKB-UniRule"/>
</dbReference>
<dbReference type="FunFam" id="3.30.230.10:FF:000020">
    <property type="entry name" value="Homoserine kinase"/>
    <property type="match status" value="1"/>
</dbReference>
<dbReference type="FunFam" id="3.30.70.890:FF:000002">
    <property type="entry name" value="Homoserine kinase"/>
    <property type="match status" value="1"/>
</dbReference>
<dbReference type="Gene3D" id="3.30.230.10">
    <property type="match status" value="1"/>
</dbReference>
<dbReference type="Gene3D" id="3.30.70.890">
    <property type="entry name" value="GHMP kinase, C-terminal domain"/>
    <property type="match status" value="1"/>
</dbReference>
<dbReference type="HAMAP" id="MF_00384">
    <property type="entry name" value="Homoser_kinase"/>
    <property type="match status" value="1"/>
</dbReference>
<dbReference type="InterPro" id="IPR013750">
    <property type="entry name" value="GHMP_kinase_C_dom"/>
</dbReference>
<dbReference type="InterPro" id="IPR036554">
    <property type="entry name" value="GHMP_kinase_C_sf"/>
</dbReference>
<dbReference type="InterPro" id="IPR006204">
    <property type="entry name" value="GHMP_kinase_N_dom"/>
</dbReference>
<dbReference type="InterPro" id="IPR006203">
    <property type="entry name" value="GHMP_knse_ATP-bd_CS"/>
</dbReference>
<dbReference type="InterPro" id="IPR000870">
    <property type="entry name" value="Homoserine_kinase"/>
</dbReference>
<dbReference type="InterPro" id="IPR020568">
    <property type="entry name" value="Ribosomal_Su5_D2-typ_SF"/>
</dbReference>
<dbReference type="InterPro" id="IPR014721">
    <property type="entry name" value="Ribsml_uS5_D2-typ_fold_subgr"/>
</dbReference>
<dbReference type="NCBIfam" id="NF002288">
    <property type="entry name" value="PRK01212.1-4"/>
    <property type="match status" value="1"/>
</dbReference>
<dbReference type="NCBIfam" id="TIGR00191">
    <property type="entry name" value="thrB"/>
    <property type="match status" value="1"/>
</dbReference>
<dbReference type="PANTHER" id="PTHR20861:SF1">
    <property type="entry name" value="HOMOSERINE KINASE"/>
    <property type="match status" value="1"/>
</dbReference>
<dbReference type="PANTHER" id="PTHR20861">
    <property type="entry name" value="HOMOSERINE/4-DIPHOSPHOCYTIDYL-2-C-METHYL-D-ERYTHRITOL KINASE"/>
    <property type="match status" value="1"/>
</dbReference>
<dbReference type="Pfam" id="PF08544">
    <property type="entry name" value="GHMP_kinases_C"/>
    <property type="match status" value="1"/>
</dbReference>
<dbReference type="Pfam" id="PF00288">
    <property type="entry name" value="GHMP_kinases_N"/>
    <property type="match status" value="1"/>
</dbReference>
<dbReference type="PIRSF" id="PIRSF000676">
    <property type="entry name" value="Homoser_kin"/>
    <property type="match status" value="1"/>
</dbReference>
<dbReference type="PRINTS" id="PR00958">
    <property type="entry name" value="HOMSERKINASE"/>
</dbReference>
<dbReference type="SUPFAM" id="SSF55060">
    <property type="entry name" value="GHMP Kinase, C-terminal domain"/>
    <property type="match status" value="1"/>
</dbReference>
<dbReference type="SUPFAM" id="SSF54211">
    <property type="entry name" value="Ribosomal protein S5 domain 2-like"/>
    <property type="match status" value="1"/>
</dbReference>
<dbReference type="PROSITE" id="PS00627">
    <property type="entry name" value="GHMP_KINASES_ATP"/>
    <property type="match status" value="1"/>
</dbReference>
<sequence length="309" mass="33286">MVKVYAPASSANMSVGFDVLGAAVTPVDGTLLGDVVSVEAADHFRLHNLGRFADKLPPEPRENIVYQCWERFCQALGKTIPVAMTLEKNMPIGSGLGSSACSVVAALVAMNEHCGKPLNDTRLLALMGELEGRISGSIHYDNVAPCFLGGMQLMIEENGIISQQVPGFDEWLWVLAYPGIKVSTAEARAILPAQYRRQDCIAHGRHLAGFIHACYSRQPQLAAALMKDVIAEPYRARLLPGFSQARQAVSEIGALASGISGSGPTLFALCDKPETAQRVADWLSKHYLQNQEGFVHICRLDTAGARVVG</sequence>
<accession>Q5PDM3</accession>
<evidence type="ECO:0000255" key="1">
    <source>
        <dbReference type="HAMAP-Rule" id="MF_00384"/>
    </source>
</evidence>
<organism>
    <name type="scientific">Salmonella paratyphi A (strain ATCC 9150 / SARB42)</name>
    <dbReference type="NCBI Taxonomy" id="295319"/>
    <lineage>
        <taxon>Bacteria</taxon>
        <taxon>Pseudomonadati</taxon>
        <taxon>Pseudomonadota</taxon>
        <taxon>Gammaproteobacteria</taxon>
        <taxon>Enterobacterales</taxon>
        <taxon>Enterobacteriaceae</taxon>
        <taxon>Salmonella</taxon>
    </lineage>
</organism>
<name>KHSE_SALPA</name>
<feature type="chain" id="PRO_1000049162" description="Homoserine kinase">
    <location>
        <begin position="1"/>
        <end position="309"/>
    </location>
</feature>
<feature type="binding site" evidence="1">
    <location>
        <begin position="91"/>
        <end position="101"/>
    </location>
    <ligand>
        <name>ATP</name>
        <dbReference type="ChEBI" id="CHEBI:30616"/>
    </ligand>
</feature>
<comment type="function">
    <text evidence="1">Catalyzes the ATP-dependent phosphorylation of L-homoserine to L-homoserine phosphate.</text>
</comment>
<comment type="catalytic activity">
    <reaction evidence="1">
        <text>L-homoserine + ATP = O-phospho-L-homoserine + ADP + H(+)</text>
        <dbReference type="Rhea" id="RHEA:13985"/>
        <dbReference type="ChEBI" id="CHEBI:15378"/>
        <dbReference type="ChEBI" id="CHEBI:30616"/>
        <dbReference type="ChEBI" id="CHEBI:57476"/>
        <dbReference type="ChEBI" id="CHEBI:57590"/>
        <dbReference type="ChEBI" id="CHEBI:456216"/>
        <dbReference type="EC" id="2.7.1.39"/>
    </reaction>
</comment>
<comment type="pathway">
    <text evidence="1">Amino-acid biosynthesis; L-threonine biosynthesis; L-threonine from L-aspartate: step 4/5.</text>
</comment>
<comment type="subcellular location">
    <subcellularLocation>
        <location evidence="1">Cytoplasm</location>
    </subcellularLocation>
</comment>
<comment type="similarity">
    <text evidence="1">Belongs to the GHMP kinase family. Homoserine kinase subfamily.</text>
</comment>
<gene>
    <name evidence="1" type="primary">thrB</name>
    <name type="ordered locus">SPA0003</name>
</gene>
<reference key="1">
    <citation type="journal article" date="2004" name="Nat. Genet.">
        <title>Comparison of genome degradation in Paratyphi A and Typhi, human-restricted serovars of Salmonella enterica that cause typhoid.</title>
        <authorList>
            <person name="McClelland M."/>
            <person name="Sanderson K.E."/>
            <person name="Clifton S.W."/>
            <person name="Latreille P."/>
            <person name="Porwollik S."/>
            <person name="Sabo A."/>
            <person name="Meyer R."/>
            <person name="Bieri T."/>
            <person name="Ozersky P."/>
            <person name="McLellan M."/>
            <person name="Harkins C.R."/>
            <person name="Wang C."/>
            <person name="Nguyen C."/>
            <person name="Berghoff A."/>
            <person name="Elliott G."/>
            <person name="Kohlberg S."/>
            <person name="Strong C."/>
            <person name="Du F."/>
            <person name="Carter J."/>
            <person name="Kremizki C."/>
            <person name="Layman D."/>
            <person name="Leonard S."/>
            <person name="Sun H."/>
            <person name="Fulton L."/>
            <person name="Nash W."/>
            <person name="Miner T."/>
            <person name="Minx P."/>
            <person name="Delehaunty K."/>
            <person name="Fronick C."/>
            <person name="Magrini V."/>
            <person name="Nhan M."/>
            <person name="Warren W."/>
            <person name="Florea L."/>
            <person name="Spieth J."/>
            <person name="Wilson R.K."/>
        </authorList>
    </citation>
    <scope>NUCLEOTIDE SEQUENCE [LARGE SCALE GENOMIC DNA]</scope>
    <source>
        <strain>ATCC 9150 / SARB42</strain>
    </source>
</reference>
<protein>
    <recommendedName>
        <fullName evidence="1">Homoserine kinase</fullName>
        <shortName evidence="1">HK</shortName>
        <shortName evidence="1">HSK</shortName>
        <ecNumber evidence="1">2.7.1.39</ecNumber>
    </recommendedName>
</protein>
<keyword id="KW-0028">Amino-acid biosynthesis</keyword>
<keyword id="KW-0067">ATP-binding</keyword>
<keyword id="KW-0963">Cytoplasm</keyword>
<keyword id="KW-0418">Kinase</keyword>
<keyword id="KW-0547">Nucleotide-binding</keyword>
<keyword id="KW-0791">Threonine biosynthesis</keyword>
<keyword id="KW-0808">Transferase</keyword>
<proteinExistence type="inferred from homology"/>